<feature type="signal peptide" evidence="1">
    <location>
        <begin position="1"/>
        <end position="22"/>
    </location>
</feature>
<feature type="propeptide" id="PRO_0000371437" evidence="2">
    <location>
        <begin position="23"/>
        <end position="49"/>
    </location>
</feature>
<feature type="peptide" id="PRO_0000371438" description="Raniseptin-1" evidence="2">
    <location>
        <begin position="52"/>
        <end position="80"/>
    </location>
</feature>
<accession>P86037</accession>
<name>RNSP1_BOARA</name>
<sequence length="80" mass="9253">MAFLKKSLFLVLFLGIVSLSICEEEKREGEEEEKQEEENEELSEEELRERRAWLDKLKSLGKVVGKVALGVAQNYLNPQQ</sequence>
<comment type="function">
    <text evidence="2">Has antibacterial activity against the Gram-negative bacteria E.coli ATCC 25922 (MIC=5 uM), P.aeruginosa ATCC 27853 (MIC=10 uM) and X.citri (MIC&lt; 2 uM), and the Gram-positive bacterium S.aureus ATCC 29313 (MIC=20 uM). Does not have hemolytic activity against human erythrocytes.</text>
</comment>
<comment type="subcellular location">
    <subcellularLocation>
        <location evidence="2">Secreted</location>
    </subcellularLocation>
</comment>
<comment type="tissue specificity">
    <text evidence="2">Expressed by the skin glands.</text>
</comment>
<comment type="similarity">
    <text evidence="1">Belongs to the frog skin active peptide (FSAP) family. Dermaseptin subfamily.</text>
</comment>
<keyword id="KW-0878">Amphibian defense peptide</keyword>
<keyword id="KW-0044">Antibiotic</keyword>
<keyword id="KW-0929">Antimicrobial</keyword>
<keyword id="KW-0165">Cleavage on pair of basic residues</keyword>
<keyword id="KW-0903">Direct protein sequencing</keyword>
<keyword id="KW-0964">Secreted</keyword>
<keyword id="KW-0732">Signal</keyword>
<proteinExistence type="evidence at protein level"/>
<dbReference type="TCDB" id="1.C.52.1.13">
    <property type="family name" value="the dermaseptin (dermaseptin) family"/>
</dbReference>
<dbReference type="GO" id="GO:0005576">
    <property type="term" value="C:extracellular region"/>
    <property type="evidence" value="ECO:0007669"/>
    <property type="project" value="UniProtKB-SubCell"/>
</dbReference>
<dbReference type="GO" id="GO:0042742">
    <property type="term" value="P:defense response to bacterium"/>
    <property type="evidence" value="ECO:0007669"/>
    <property type="project" value="UniProtKB-KW"/>
</dbReference>
<dbReference type="InterPro" id="IPR004275">
    <property type="entry name" value="Frog_antimicrobial_propeptide"/>
</dbReference>
<dbReference type="InterPro" id="IPR016322">
    <property type="entry name" value="FSAP"/>
</dbReference>
<dbReference type="Pfam" id="PF03032">
    <property type="entry name" value="FSAP_sig_propep"/>
    <property type="match status" value="1"/>
</dbReference>
<dbReference type="PIRSF" id="PIRSF001822">
    <property type="entry name" value="Dermaseptin_precursor"/>
    <property type="match status" value="1"/>
</dbReference>
<organism>
    <name type="scientific">Boana raniceps</name>
    <name type="common">Chaco tree frog</name>
    <name type="synonym">Hyla roeschmanni</name>
    <dbReference type="NCBI Taxonomy" id="192750"/>
    <lineage>
        <taxon>Eukaryota</taxon>
        <taxon>Metazoa</taxon>
        <taxon>Chordata</taxon>
        <taxon>Craniata</taxon>
        <taxon>Vertebrata</taxon>
        <taxon>Euteleostomi</taxon>
        <taxon>Amphibia</taxon>
        <taxon>Batrachia</taxon>
        <taxon>Anura</taxon>
        <taxon>Neobatrachia</taxon>
        <taxon>Hyloidea</taxon>
        <taxon>Hylidae</taxon>
        <taxon>Hylinae</taxon>
        <taxon>Cophomantini</taxon>
        <taxon>Boana</taxon>
    </lineage>
</organism>
<evidence type="ECO:0000255" key="1"/>
<evidence type="ECO:0000269" key="2">
    <source>
    </source>
</evidence>
<evidence type="ECO:0000303" key="3">
    <source>
    </source>
</evidence>
<evidence type="ECO:0000305" key="4"/>
<protein>
    <recommendedName>
        <fullName evidence="3">Raniseptin-1</fullName>
        <shortName evidence="3">Rsp-1</shortName>
    </recommendedName>
</protein>
<reference evidence="4" key="1">
    <citation type="journal article" date="2008" name="Biochem. Biophys. Res. Commun.">
        <title>Post-secretory events alter the peptide content of the skin secretion of Hypsiboas raniceps.</title>
        <authorList>
            <person name="Magalhaes B.S."/>
            <person name="Melo J.A.T."/>
            <person name="Leite J.R.S.A."/>
            <person name="Silva L.P."/>
            <person name="Prates M.V."/>
            <person name="Vinecky F."/>
            <person name="Barbosa E.A."/>
            <person name="Verly R.M."/>
            <person name="Mehta A."/>
            <person name="Nicoli J.R."/>
            <person name="Bemquerer M.P."/>
            <person name="Andrade A.C."/>
            <person name="Bloch C. Jr."/>
        </authorList>
    </citation>
    <scope>NUCLEOTIDE SEQUENCE [MRNA]</scope>
    <scope>PROTEIN SEQUENCE OF 52-80</scope>
    <scope>FUNCTION</scope>
    <scope>SUBCELLULAR LOCATION</scope>
    <scope>TISSUE SPECIFICITY</scope>
    <source>
        <tissue evidence="2">Skin</tissue>
        <tissue evidence="2">Skin secretion</tissue>
    </source>
</reference>